<name>HIS7_BRUAB</name>
<evidence type="ECO:0000255" key="1">
    <source>
        <dbReference type="HAMAP-Rule" id="MF_00076"/>
    </source>
</evidence>
<comment type="catalytic activity">
    <reaction evidence="1">
        <text>D-erythro-1-(imidazol-4-yl)glycerol 3-phosphate = 3-(imidazol-4-yl)-2-oxopropyl phosphate + H2O</text>
        <dbReference type="Rhea" id="RHEA:11040"/>
        <dbReference type="ChEBI" id="CHEBI:15377"/>
        <dbReference type="ChEBI" id="CHEBI:57766"/>
        <dbReference type="ChEBI" id="CHEBI:58278"/>
        <dbReference type="EC" id="4.2.1.19"/>
    </reaction>
</comment>
<comment type="pathway">
    <text evidence="1">Amino-acid biosynthesis; L-histidine biosynthesis; L-histidine from 5-phospho-alpha-D-ribose 1-diphosphate: step 6/9.</text>
</comment>
<comment type="subcellular location">
    <subcellularLocation>
        <location evidence="1">Cytoplasm</location>
    </subcellularLocation>
</comment>
<comment type="similarity">
    <text evidence="1">Belongs to the imidazoleglycerol-phosphate dehydratase family.</text>
</comment>
<feature type="chain" id="PRO_1000010250" description="Imidazoleglycerol-phosphate dehydratase">
    <location>
        <begin position="1"/>
        <end position="202"/>
    </location>
</feature>
<keyword id="KW-0028">Amino-acid biosynthesis</keyword>
<keyword id="KW-0963">Cytoplasm</keyword>
<keyword id="KW-0368">Histidine biosynthesis</keyword>
<keyword id="KW-0456">Lyase</keyword>
<accession>Q57AH7</accession>
<organism>
    <name type="scientific">Brucella abortus biovar 1 (strain 9-941)</name>
    <dbReference type="NCBI Taxonomy" id="262698"/>
    <lineage>
        <taxon>Bacteria</taxon>
        <taxon>Pseudomonadati</taxon>
        <taxon>Pseudomonadota</taxon>
        <taxon>Alphaproteobacteria</taxon>
        <taxon>Hyphomicrobiales</taxon>
        <taxon>Brucellaceae</taxon>
        <taxon>Brucella/Ochrobactrum group</taxon>
        <taxon>Brucella</taxon>
    </lineage>
</organism>
<proteinExistence type="inferred from homology"/>
<gene>
    <name evidence="1" type="primary">hisB</name>
    <name type="ordered locus">BruAb1_2056</name>
</gene>
<sequence>MTAESTRKASIERSTKETSIAVSVDLDGVGKFDITTGVGFFDHMLEQLSRHSLIDMRVMAKGDLHIDDHHTVEDTGIALGQAVAKALGERRGIVRYASLDLAMDDTLTGAAVDVSGRAFLVWNVNFTTAKIGTFDTELVREFFQAFAMNAGITLHINNHYGANNHHIAESTFKAVARVLRAALETDPRQKDAIPSTKGSLKG</sequence>
<dbReference type="EC" id="4.2.1.19" evidence="1"/>
<dbReference type="EMBL" id="AE017223">
    <property type="protein sequence ID" value="AAX75357.1"/>
    <property type="molecule type" value="Genomic_DNA"/>
</dbReference>
<dbReference type="RefSeq" id="WP_002967034.1">
    <property type="nucleotide sequence ID" value="NC_006932.1"/>
</dbReference>
<dbReference type="SMR" id="Q57AH7"/>
<dbReference type="EnsemblBacteria" id="AAX75357">
    <property type="protein sequence ID" value="AAX75357"/>
    <property type="gene ID" value="BruAb1_2056"/>
</dbReference>
<dbReference type="GeneID" id="97534656"/>
<dbReference type="KEGG" id="bmb:BruAb1_2056"/>
<dbReference type="HOGENOM" id="CLU_044308_3_0_5"/>
<dbReference type="UniPathway" id="UPA00031">
    <property type="reaction ID" value="UER00011"/>
</dbReference>
<dbReference type="Proteomes" id="UP000000540">
    <property type="component" value="Chromosome I"/>
</dbReference>
<dbReference type="GO" id="GO:0005737">
    <property type="term" value="C:cytoplasm"/>
    <property type="evidence" value="ECO:0007669"/>
    <property type="project" value="UniProtKB-SubCell"/>
</dbReference>
<dbReference type="GO" id="GO:0004424">
    <property type="term" value="F:imidazoleglycerol-phosphate dehydratase activity"/>
    <property type="evidence" value="ECO:0007669"/>
    <property type="project" value="UniProtKB-UniRule"/>
</dbReference>
<dbReference type="GO" id="GO:0000105">
    <property type="term" value="P:L-histidine biosynthetic process"/>
    <property type="evidence" value="ECO:0007669"/>
    <property type="project" value="UniProtKB-UniRule"/>
</dbReference>
<dbReference type="CDD" id="cd07914">
    <property type="entry name" value="IGPD"/>
    <property type="match status" value="1"/>
</dbReference>
<dbReference type="FunFam" id="3.30.230.40:FF:000001">
    <property type="entry name" value="Imidazoleglycerol-phosphate dehydratase HisB"/>
    <property type="match status" value="1"/>
</dbReference>
<dbReference type="FunFam" id="3.30.230.40:FF:000003">
    <property type="entry name" value="Imidazoleglycerol-phosphate dehydratase HisB"/>
    <property type="match status" value="1"/>
</dbReference>
<dbReference type="Gene3D" id="3.30.230.40">
    <property type="entry name" value="Imidazole glycerol phosphate dehydratase, domain 1"/>
    <property type="match status" value="2"/>
</dbReference>
<dbReference type="HAMAP" id="MF_00076">
    <property type="entry name" value="HisB"/>
    <property type="match status" value="1"/>
</dbReference>
<dbReference type="InterPro" id="IPR038494">
    <property type="entry name" value="IGPD_sf"/>
</dbReference>
<dbReference type="InterPro" id="IPR000807">
    <property type="entry name" value="ImidazoleglycerolP_deHydtase"/>
</dbReference>
<dbReference type="InterPro" id="IPR020565">
    <property type="entry name" value="ImidazoleglycerP_deHydtase_CS"/>
</dbReference>
<dbReference type="InterPro" id="IPR020568">
    <property type="entry name" value="Ribosomal_Su5_D2-typ_SF"/>
</dbReference>
<dbReference type="NCBIfam" id="NF002109">
    <property type="entry name" value="PRK00951.1-5"/>
    <property type="match status" value="1"/>
</dbReference>
<dbReference type="NCBIfam" id="NF002111">
    <property type="entry name" value="PRK00951.2-1"/>
    <property type="match status" value="1"/>
</dbReference>
<dbReference type="NCBIfam" id="NF002114">
    <property type="entry name" value="PRK00951.2-4"/>
    <property type="match status" value="1"/>
</dbReference>
<dbReference type="PANTHER" id="PTHR23133:SF2">
    <property type="entry name" value="IMIDAZOLEGLYCEROL-PHOSPHATE DEHYDRATASE"/>
    <property type="match status" value="1"/>
</dbReference>
<dbReference type="PANTHER" id="PTHR23133">
    <property type="entry name" value="IMIDAZOLEGLYCEROL-PHOSPHATE DEHYDRATASE HIS7"/>
    <property type="match status" value="1"/>
</dbReference>
<dbReference type="Pfam" id="PF00475">
    <property type="entry name" value="IGPD"/>
    <property type="match status" value="1"/>
</dbReference>
<dbReference type="SUPFAM" id="SSF54211">
    <property type="entry name" value="Ribosomal protein S5 domain 2-like"/>
    <property type="match status" value="2"/>
</dbReference>
<dbReference type="PROSITE" id="PS00954">
    <property type="entry name" value="IGP_DEHYDRATASE_1"/>
    <property type="match status" value="1"/>
</dbReference>
<dbReference type="PROSITE" id="PS00955">
    <property type="entry name" value="IGP_DEHYDRATASE_2"/>
    <property type="match status" value="1"/>
</dbReference>
<protein>
    <recommendedName>
        <fullName evidence="1">Imidazoleglycerol-phosphate dehydratase</fullName>
        <shortName evidence="1">IGPD</shortName>
        <ecNumber evidence="1">4.2.1.19</ecNumber>
    </recommendedName>
</protein>
<reference key="1">
    <citation type="journal article" date="2005" name="J. Bacteriol.">
        <title>Completion of the genome sequence of Brucella abortus and comparison to the highly similar genomes of Brucella melitensis and Brucella suis.</title>
        <authorList>
            <person name="Halling S.M."/>
            <person name="Peterson-Burch B.D."/>
            <person name="Bricker B.J."/>
            <person name="Zuerner R.L."/>
            <person name="Qing Z."/>
            <person name="Li L.-L."/>
            <person name="Kapur V."/>
            <person name="Alt D.P."/>
            <person name="Olsen S.C."/>
        </authorList>
    </citation>
    <scope>NUCLEOTIDE SEQUENCE [LARGE SCALE GENOMIC DNA]</scope>
    <source>
        <strain>9-941</strain>
    </source>
</reference>